<feature type="chain" id="PRO_0000353094" description="Zinc finger protein 513">
    <location>
        <begin position="1"/>
        <end position="541"/>
    </location>
</feature>
<feature type="zinc finger region" description="C2H2-type 1" evidence="3">
    <location>
        <begin position="150"/>
        <end position="172"/>
    </location>
</feature>
<feature type="zinc finger region" description="C2H2-type 2" evidence="3">
    <location>
        <begin position="178"/>
        <end position="200"/>
    </location>
</feature>
<feature type="zinc finger region" description="C2H2-type 3" evidence="3">
    <location>
        <begin position="206"/>
        <end position="228"/>
    </location>
</feature>
<feature type="zinc finger region" description="C2H2-type 4" evidence="3">
    <location>
        <begin position="360"/>
        <end position="382"/>
    </location>
</feature>
<feature type="zinc finger region" description="C2H2-type 5" evidence="3">
    <location>
        <begin position="388"/>
        <end position="410"/>
    </location>
</feature>
<feature type="zinc finger region" description="C2H2-type 6" evidence="3">
    <location>
        <begin position="416"/>
        <end position="438"/>
    </location>
</feature>
<feature type="zinc finger region" description="C2H2-type 7" evidence="3">
    <location>
        <begin position="444"/>
        <end position="466"/>
    </location>
</feature>
<feature type="zinc finger region" description="C2H2-type 8" evidence="3">
    <location>
        <begin position="472"/>
        <end position="494"/>
    </location>
</feature>
<feature type="region of interest" description="Disordered" evidence="4">
    <location>
        <begin position="1"/>
        <end position="120"/>
    </location>
</feature>
<feature type="region of interest" description="Disordered" evidence="4">
    <location>
        <begin position="492"/>
        <end position="541"/>
    </location>
</feature>
<feature type="compositionally biased region" description="Acidic residues" evidence="4">
    <location>
        <begin position="44"/>
        <end position="55"/>
    </location>
</feature>
<feature type="compositionally biased region" description="Basic and acidic residues" evidence="4">
    <location>
        <begin position="103"/>
        <end position="115"/>
    </location>
</feature>
<feature type="modified residue" description="Phosphoserine" evidence="6">
    <location>
        <position position="85"/>
    </location>
</feature>
<feature type="modified residue" description="Phosphoserine" evidence="2">
    <location>
        <position position="96"/>
    </location>
</feature>
<evidence type="ECO:0000250" key="1"/>
<evidence type="ECO:0000250" key="2">
    <source>
        <dbReference type="UniProtKB" id="Q6PD29"/>
    </source>
</evidence>
<evidence type="ECO:0000255" key="3">
    <source>
        <dbReference type="PROSITE-ProRule" id="PRU00042"/>
    </source>
</evidence>
<evidence type="ECO:0000256" key="4">
    <source>
        <dbReference type="SAM" id="MobiDB-lite"/>
    </source>
</evidence>
<evidence type="ECO:0000305" key="5"/>
<evidence type="ECO:0007744" key="6">
    <source>
    </source>
</evidence>
<name>ZN513_RAT</name>
<organism>
    <name type="scientific">Rattus norvegicus</name>
    <name type="common">Rat</name>
    <dbReference type="NCBI Taxonomy" id="10116"/>
    <lineage>
        <taxon>Eukaryota</taxon>
        <taxon>Metazoa</taxon>
        <taxon>Chordata</taxon>
        <taxon>Craniata</taxon>
        <taxon>Vertebrata</taxon>
        <taxon>Euteleostomi</taxon>
        <taxon>Mammalia</taxon>
        <taxon>Eutheria</taxon>
        <taxon>Euarchontoglires</taxon>
        <taxon>Glires</taxon>
        <taxon>Rodentia</taxon>
        <taxon>Myomorpha</taxon>
        <taxon>Muroidea</taxon>
        <taxon>Muridae</taxon>
        <taxon>Murinae</taxon>
        <taxon>Rattus</taxon>
    </lineage>
</organism>
<reference key="1">
    <citation type="journal article" date="2004" name="Genome Res.">
        <title>The status, quality, and expansion of the NIH full-length cDNA project: the Mammalian Gene Collection (MGC).</title>
        <authorList>
            <consortium name="The MGC Project Team"/>
        </authorList>
    </citation>
    <scope>NUCLEOTIDE SEQUENCE [LARGE SCALE MRNA]</scope>
    <source>
        <tissue>Heart</tissue>
    </source>
</reference>
<reference key="2">
    <citation type="journal article" date="2012" name="Nat. Commun.">
        <title>Quantitative maps of protein phosphorylation sites across 14 different rat organs and tissues.</title>
        <authorList>
            <person name="Lundby A."/>
            <person name="Secher A."/>
            <person name="Lage K."/>
            <person name="Nordsborg N.B."/>
            <person name="Dmytriyev A."/>
            <person name="Lundby C."/>
            <person name="Olsen J.V."/>
        </authorList>
    </citation>
    <scope>PHOSPHORYLATION [LARGE SCALE ANALYSIS] AT SER-85</scope>
    <scope>IDENTIFICATION BY MASS SPECTROMETRY [LARGE SCALE ANALYSIS]</scope>
</reference>
<keyword id="KW-0238">DNA-binding</keyword>
<keyword id="KW-0479">Metal-binding</keyword>
<keyword id="KW-0539">Nucleus</keyword>
<keyword id="KW-0597">Phosphoprotein</keyword>
<keyword id="KW-1185">Reference proteome</keyword>
<keyword id="KW-0677">Repeat</keyword>
<keyword id="KW-0804">Transcription</keyword>
<keyword id="KW-0805">Transcription regulation</keyword>
<keyword id="KW-0862">Zinc</keyword>
<keyword id="KW-0863">Zinc-finger</keyword>
<sequence length="541" mass="58091">MPRRKQSHPQPVKCEGVKVDTEDSFDEGPGALVLESDLLLGQDLEFEEEEEEEEGDGHNDQLMGFERDSEGDSQGARPGLPYGLSDDESGGGRALSAESEVEEPARGPGEARGERPGPACQLCGGPTGEGPCCGAGGPGGGPPLPPRLLYSCRLCAFVSHYSSHLKRHMQTHSGEKPFRCGRCPYASAQLVNLTRHTRTHTGEKPYRCPHCPFACSSLGNLRRHQRTHTGPPTPPCPTCGFRCCAPRPTRPPSPTEQEGTMPRRSEDALILPDLSLHVPPGGTSFLPDCGQLRGEGEGLCGTGSEPLPELLFPWTCRGCGQELEEGEGSRLGTAMCGRCMRGESGGGGSGGPQGPSDKGFACSLCPFATHYPNHLARHMKTHSGEKPFRCARCPYASAHLDNLKRHQRVHTGEKPYKCPLCPYACGNLANLKRHGRIHSGDKPFRCSLCNYSCNQSMNLKRHMLRHTGEKPFRCATCAYTTGHWDNYKRHQKVHGHGGAGGPGLSAPEGWAPPHSPPSVLSTRGSAALGATGSRALHTDSP</sequence>
<protein>
    <recommendedName>
        <fullName>Zinc finger protein 513</fullName>
    </recommendedName>
</protein>
<dbReference type="EMBL" id="BC089202">
    <property type="protein sequence ID" value="AAH89202.1"/>
    <property type="molecule type" value="mRNA"/>
</dbReference>
<dbReference type="RefSeq" id="NP_001012110.1">
    <property type="nucleotide sequence ID" value="NM_001012110.1"/>
</dbReference>
<dbReference type="SMR" id="Q5FWU5"/>
<dbReference type="FunCoup" id="Q5FWU5">
    <property type="interactions" value="1589"/>
</dbReference>
<dbReference type="STRING" id="10116.ENSRNOP00000040002"/>
<dbReference type="GlyGen" id="Q5FWU5">
    <property type="glycosylation" value="4 sites"/>
</dbReference>
<dbReference type="iPTMnet" id="Q5FWU5"/>
<dbReference type="PhosphoSitePlus" id="Q5FWU5"/>
<dbReference type="PaxDb" id="10116-ENSRNOP00000040002"/>
<dbReference type="Ensembl" id="ENSRNOT00000050102.4">
    <property type="protein sequence ID" value="ENSRNOP00000040002.3"/>
    <property type="gene ID" value="ENSRNOG00000005298.7"/>
</dbReference>
<dbReference type="GeneID" id="313913"/>
<dbReference type="KEGG" id="rno:313913"/>
<dbReference type="AGR" id="RGD:1310456"/>
<dbReference type="CTD" id="101023"/>
<dbReference type="RGD" id="1310456">
    <property type="gene designation" value="Zfp513"/>
</dbReference>
<dbReference type="eggNOG" id="KOG1721">
    <property type="taxonomic scope" value="Eukaryota"/>
</dbReference>
<dbReference type="GeneTree" id="ENSGT00940000158687"/>
<dbReference type="HOGENOM" id="CLU_002678_58_1_1"/>
<dbReference type="InParanoid" id="Q5FWU5"/>
<dbReference type="OMA" id="SICGYSC"/>
<dbReference type="OrthoDB" id="654211at2759"/>
<dbReference type="PhylomeDB" id="Q5FWU5"/>
<dbReference type="PRO" id="PR:Q5FWU5"/>
<dbReference type="Proteomes" id="UP000002494">
    <property type="component" value="Chromosome 6"/>
</dbReference>
<dbReference type="Bgee" id="ENSRNOG00000005298">
    <property type="expression patterns" value="Expressed in thymus and 20 other cell types or tissues"/>
</dbReference>
<dbReference type="GO" id="GO:0005634">
    <property type="term" value="C:nucleus"/>
    <property type="evidence" value="ECO:0000250"/>
    <property type="project" value="UniProtKB"/>
</dbReference>
<dbReference type="GO" id="GO:0003677">
    <property type="term" value="F:DNA binding"/>
    <property type="evidence" value="ECO:0000266"/>
    <property type="project" value="RGD"/>
</dbReference>
<dbReference type="GO" id="GO:0000976">
    <property type="term" value="F:transcription cis-regulatory region binding"/>
    <property type="evidence" value="ECO:0000266"/>
    <property type="project" value="RGD"/>
</dbReference>
<dbReference type="GO" id="GO:0008270">
    <property type="term" value="F:zinc ion binding"/>
    <property type="evidence" value="ECO:0007669"/>
    <property type="project" value="UniProtKB-KW"/>
</dbReference>
<dbReference type="GO" id="GO:0045944">
    <property type="term" value="P:positive regulation of transcription by RNA polymerase II"/>
    <property type="evidence" value="ECO:0000318"/>
    <property type="project" value="GO_Central"/>
</dbReference>
<dbReference type="GO" id="GO:0060041">
    <property type="term" value="P:retina development in camera-type eye"/>
    <property type="evidence" value="ECO:0000250"/>
    <property type="project" value="UniProtKB"/>
</dbReference>
<dbReference type="FunFam" id="3.30.160.60:FF:000049">
    <property type="entry name" value="transcriptional repressor CTCF isoform X1"/>
    <property type="match status" value="2"/>
</dbReference>
<dbReference type="FunFam" id="3.30.160.60:FF:000123">
    <property type="entry name" value="transcriptional repressor CTCF isoform X1"/>
    <property type="match status" value="1"/>
</dbReference>
<dbReference type="FunFam" id="3.30.160.60:FF:000584">
    <property type="entry name" value="Zinc finger protein 513"/>
    <property type="match status" value="1"/>
</dbReference>
<dbReference type="FunFam" id="3.30.160.60:FF:000713">
    <property type="entry name" value="Zinc finger protein 513"/>
    <property type="match status" value="1"/>
</dbReference>
<dbReference type="FunFam" id="3.30.160.60:FF:000395">
    <property type="entry name" value="zinc finger protein 513"/>
    <property type="match status" value="1"/>
</dbReference>
<dbReference type="FunFam" id="3.30.160.60:FF:000962">
    <property type="entry name" value="zinc finger protein 513 isoform X1"/>
    <property type="match status" value="1"/>
</dbReference>
<dbReference type="FunFam" id="3.30.160.60:FF:000558">
    <property type="entry name" value="zinc finger protein 513 isoform X2"/>
    <property type="match status" value="1"/>
</dbReference>
<dbReference type="Gene3D" id="3.30.160.60">
    <property type="entry name" value="Classic Zinc Finger"/>
    <property type="match status" value="8"/>
</dbReference>
<dbReference type="InterPro" id="IPR036236">
    <property type="entry name" value="Znf_C2H2_sf"/>
</dbReference>
<dbReference type="InterPro" id="IPR013087">
    <property type="entry name" value="Znf_C2H2_type"/>
</dbReference>
<dbReference type="PANTHER" id="PTHR24379:SF121">
    <property type="entry name" value="C2H2-TYPE DOMAIN-CONTAINING PROTEIN"/>
    <property type="match status" value="1"/>
</dbReference>
<dbReference type="PANTHER" id="PTHR24379">
    <property type="entry name" value="KRAB AND ZINC FINGER DOMAIN-CONTAINING"/>
    <property type="match status" value="1"/>
</dbReference>
<dbReference type="Pfam" id="PF00096">
    <property type="entry name" value="zf-C2H2"/>
    <property type="match status" value="5"/>
</dbReference>
<dbReference type="SMART" id="SM00355">
    <property type="entry name" value="ZnF_C2H2"/>
    <property type="match status" value="8"/>
</dbReference>
<dbReference type="SUPFAM" id="SSF57667">
    <property type="entry name" value="beta-beta-alpha zinc fingers"/>
    <property type="match status" value="5"/>
</dbReference>
<dbReference type="PROSITE" id="PS00028">
    <property type="entry name" value="ZINC_FINGER_C2H2_1"/>
    <property type="match status" value="3"/>
</dbReference>
<dbReference type="PROSITE" id="PS50157">
    <property type="entry name" value="ZINC_FINGER_C2H2_2"/>
    <property type="match status" value="7"/>
</dbReference>
<proteinExistence type="evidence at protein level"/>
<accession>Q5FWU5</accession>
<gene>
    <name type="primary">Znf513</name>
    <name type="synonym">Zfp513</name>
</gene>
<comment type="function">
    <text evidence="1">Transcriptional regulator that plays a role in retinal development and maintenance.</text>
</comment>
<comment type="subunit">
    <text evidence="1">Binds DNA. Can associate with the proximal promoter regions of PAX6 and SP4, and their known targets including ARR3, RHO, OPN1MW2 and OPN1SW.</text>
</comment>
<comment type="subcellular location">
    <subcellularLocation>
        <location evidence="1">Nucleus</location>
    </subcellularLocation>
</comment>
<comment type="similarity">
    <text evidence="5">Belongs to the krueppel C2H2-type zinc-finger protein family.</text>
</comment>